<gene>
    <name type="ordered locus">YDR029W</name>
</gene>
<comment type="subcellular location">
    <subcellularLocation>
        <location evidence="2">Membrane</location>
        <topology evidence="2">Multi-pass membrane protein</topology>
    </subcellularLocation>
</comment>
<protein>
    <recommendedName>
        <fullName>Uncharacterized protein YDR029W</fullName>
    </recommendedName>
</protein>
<accession>Q12111</accession>
<accession>A0A1S0T053</accession>
<proteinExistence type="predicted"/>
<sequence length="104" mass="12311">MSKYYILIELMNDKKNTNSSCDIFSFYLNFSDNPFSSFRLKSRLLYGIFSCFLLFYSLKDLIGVFKQKYLYLSILLLWLLVLLFCLAKGLSHNLRADSFLQYPL</sequence>
<reference key="1">
    <citation type="journal article" date="1997" name="Nature">
        <title>The nucleotide sequence of Saccharomyces cerevisiae chromosome IV.</title>
        <authorList>
            <person name="Jacq C."/>
            <person name="Alt-Moerbe J."/>
            <person name="Andre B."/>
            <person name="Arnold W."/>
            <person name="Bahr A."/>
            <person name="Ballesta J.P.G."/>
            <person name="Bargues M."/>
            <person name="Baron L."/>
            <person name="Becker A."/>
            <person name="Biteau N."/>
            <person name="Bloecker H."/>
            <person name="Blugeon C."/>
            <person name="Boskovic J."/>
            <person name="Brandt P."/>
            <person name="Brueckner M."/>
            <person name="Buitrago M.J."/>
            <person name="Coster F."/>
            <person name="Delaveau T."/>
            <person name="del Rey F."/>
            <person name="Dujon B."/>
            <person name="Eide L.G."/>
            <person name="Garcia-Cantalejo J.M."/>
            <person name="Goffeau A."/>
            <person name="Gomez-Peris A."/>
            <person name="Granotier C."/>
            <person name="Hanemann V."/>
            <person name="Hankeln T."/>
            <person name="Hoheisel J.D."/>
            <person name="Jaeger W."/>
            <person name="Jimenez A."/>
            <person name="Jonniaux J.-L."/>
            <person name="Kraemer C."/>
            <person name="Kuester H."/>
            <person name="Laamanen P."/>
            <person name="Legros Y."/>
            <person name="Louis E.J."/>
            <person name="Moeller-Rieker S."/>
            <person name="Monnet A."/>
            <person name="Moro M."/>
            <person name="Mueller-Auer S."/>
            <person name="Nussbaumer B."/>
            <person name="Paricio N."/>
            <person name="Paulin L."/>
            <person name="Perea J."/>
            <person name="Perez-Alonso M."/>
            <person name="Perez-Ortin J.E."/>
            <person name="Pohl T.M."/>
            <person name="Prydz H."/>
            <person name="Purnelle B."/>
            <person name="Rasmussen S.W."/>
            <person name="Remacha M.A."/>
            <person name="Revuelta J.L."/>
            <person name="Rieger M."/>
            <person name="Salom D."/>
            <person name="Saluz H.P."/>
            <person name="Saiz J.E."/>
            <person name="Saren A.-M."/>
            <person name="Schaefer M."/>
            <person name="Scharfe M."/>
            <person name="Schmidt E.R."/>
            <person name="Schneider C."/>
            <person name="Scholler P."/>
            <person name="Schwarz S."/>
            <person name="Soler-Mira A."/>
            <person name="Urrestarazu L.A."/>
            <person name="Verhasselt P."/>
            <person name="Vissers S."/>
            <person name="Voet M."/>
            <person name="Volckaert G."/>
            <person name="Wagner G."/>
            <person name="Wambutt R."/>
            <person name="Wedler E."/>
            <person name="Wedler H."/>
            <person name="Woelfl S."/>
            <person name="Harris D.E."/>
            <person name="Bowman S."/>
            <person name="Brown D."/>
            <person name="Churcher C.M."/>
            <person name="Connor R."/>
            <person name="Dedman K."/>
            <person name="Gentles S."/>
            <person name="Hamlin N."/>
            <person name="Hunt S."/>
            <person name="Jones L."/>
            <person name="McDonald S."/>
            <person name="Murphy L.D."/>
            <person name="Niblett D."/>
            <person name="Odell C."/>
            <person name="Oliver K."/>
            <person name="Rajandream M.A."/>
            <person name="Richards C."/>
            <person name="Shore L."/>
            <person name="Walsh S.V."/>
            <person name="Barrell B.G."/>
            <person name="Dietrich F.S."/>
            <person name="Mulligan J.T."/>
            <person name="Allen E."/>
            <person name="Araujo R."/>
            <person name="Aviles E."/>
            <person name="Berno A."/>
            <person name="Carpenter J."/>
            <person name="Chen E."/>
            <person name="Cherry J.M."/>
            <person name="Chung E."/>
            <person name="Duncan M."/>
            <person name="Hunicke-Smith S."/>
            <person name="Hyman R.W."/>
            <person name="Komp C."/>
            <person name="Lashkari D."/>
            <person name="Lew H."/>
            <person name="Lin D."/>
            <person name="Mosedale D."/>
            <person name="Nakahara K."/>
            <person name="Namath A."/>
            <person name="Oefner P."/>
            <person name="Oh C."/>
            <person name="Petel F.X."/>
            <person name="Roberts D."/>
            <person name="Schramm S."/>
            <person name="Schroeder M."/>
            <person name="Shogren T."/>
            <person name="Shroff N."/>
            <person name="Winant A."/>
            <person name="Yelton M.A."/>
            <person name="Botstein D."/>
            <person name="Davis R.W."/>
            <person name="Johnston M."/>
            <person name="Andrews S."/>
            <person name="Brinkman R."/>
            <person name="Cooper J."/>
            <person name="Ding H."/>
            <person name="Du Z."/>
            <person name="Favello A."/>
            <person name="Fulton L."/>
            <person name="Gattung S."/>
            <person name="Greco T."/>
            <person name="Hallsworth K."/>
            <person name="Hawkins J."/>
            <person name="Hillier L.W."/>
            <person name="Jier M."/>
            <person name="Johnson D."/>
            <person name="Johnston L."/>
            <person name="Kirsten J."/>
            <person name="Kucaba T."/>
            <person name="Langston Y."/>
            <person name="Latreille P."/>
            <person name="Le T."/>
            <person name="Mardis E."/>
            <person name="Menezes S."/>
            <person name="Miller N."/>
            <person name="Nhan M."/>
            <person name="Pauley A."/>
            <person name="Peluso D."/>
            <person name="Rifkin L."/>
            <person name="Riles L."/>
            <person name="Taich A."/>
            <person name="Trevaskis E."/>
            <person name="Vignati D."/>
            <person name="Wilcox L."/>
            <person name="Wohldman P."/>
            <person name="Vaudin M."/>
            <person name="Wilson R."/>
            <person name="Waterston R."/>
            <person name="Albermann K."/>
            <person name="Hani J."/>
            <person name="Heumann K."/>
            <person name="Kleine K."/>
            <person name="Mewes H.-W."/>
            <person name="Zollner A."/>
            <person name="Zaccaria P."/>
        </authorList>
    </citation>
    <scope>NUCLEOTIDE SEQUENCE [LARGE SCALE GENOMIC DNA]</scope>
    <source>
        <strain>ATCC 204508 / S288c</strain>
    </source>
</reference>
<reference key="2">
    <citation type="journal article" date="2014" name="G3 (Bethesda)">
        <title>The reference genome sequence of Saccharomyces cerevisiae: Then and now.</title>
        <authorList>
            <person name="Engel S.R."/>
            <person name="Dietrich F.S."/>
            <person name="Fisk D.G."/>
            <person name="Binkley G."/>
            <person name="Balakrishnan R."/>
            <person name="Costanzo M.C."/>
            <person name="Dwight S.S."/>
            <person name="Hitz B.C."/>
            <person name="Karra K."/>
            <person name="Nash R.S."/>
            <person name="Weng S."/>
            <person name="Wong E.D."/>
            <person name="Lloyd P."/>
            <person name="Skrzypek M.S."/>
            <person name="Miyasato S.R."/>
            <person name="Simison M."/>
            <person name="Cherry J.M."/>
        </authorList>
    </citation>
    <scope>GENOME REANNOTATION</scope>
    <source>
        <strain>ATCC 204508 / S288c</strain>
    </source>
</reference>
<reference key="3">
    <citation type="journal article" date="2007" name="Genome Res.">
        <title>Approaching a complete repository of sequence-verified protein-encoding clones for Saccharomyces cerevisiae.</title>
        <authorList>
            <person name="Hu Y."/>
            <person name="Rolfs A."/>
            <person name="Bhullar B."/>
            <person name="Murthy T.V.S."/>
            <person name="Zhu C."/>
            <person name="Berger M.F."/>
            <person name="Camargo A.A."/>
            <person name="Kelley F."/>
            <person name="McCarron S."/>
            <person name="Jepson D."/>
            <person name="Richardson A."/>
            <person name="Raphael J."/>
            <person name="Moreira D."/>
            <person name="Taycher E."/>
            <person name="Zuo D."/>
            <person name="Mohr S."/>
            <person name="Kane M.F."/>
            <person name="Williamson J."/>
            <person name="Simpson A.J.G."/>
            <person name="Bulyk M.L."/>
            <person name="Harlow E."/>
            <person name="Marsischky G."/>
            <person name="Kolodner R.D."/>
            <person name="LaBaer J."/>
        </authorList>
    </citation>
    <scope>NUCLEOTIDE SEQUENCE [GENOMIC DNA]</scope>
    <source>
        <strain>ATCC 204508 / S288c</strain>
    </source>
</reference>
<dbReference type="EMBL" id="Z47814">
    <property type="protein sequence ID" value="CAA87808.1"/>
    <property type="molecule type" value="Genomic_DNA"/>
</dbReference>
<dbReference type="EMBL" id="Z74325">
    <property type="protein sequence ID" value="CAA98851.1"/>
    <property type="molecule type" value="Genomic_DNA"/>
</dbReference>
<dbReference type="EMBL" id="AY693275">
    <property type="protein sequence ID" value="AAT93294.1"/>
    <property type="molecule type" value="Genomic_DNA"/>
</dbReference>
<dbReference type="EMBL" id="BK006938">
    <property type="protein sequence ID" value="DAA80275.1"/>
    <property type="molecule type" value="Genomic_DNA"/>
</dbReference>
<dbReference type="PIR" id="S50936">
    <property type="entry name" value="S50936"/>
</dbReference>
<dbReference type="RefSeq" id="NP_001335755.1">
    <property type="nucleotide sequence ID" value="NM_001348809.1"/>
</dbReference>
<dbReference type="SMR" id="Q12111"/>
<dbReference type="FunCoup" id="Q12111">
    <property type="interactions" value="21"/>
</dbReference>
<dbReference type="PaxDb" id="4932-YDR029W"/>
<dbReference type="EnsemblFungi" id="YDR029W_mRNA">
    <property type="protein sequence ID" value="YDR029W"/>
    <property type="gene ID" value="YDR029W"/>
</dbReference>
<dbReference type="GeneID" id="851593"/>
<dbReference type="AGR" id="SGD:S000002436"/>
<dbReference type="SGD" id="S000002436">
    <property type="gene designation" value="YDR029W"/>
</dbReference>
<dbReference type="HOGENOM" id="CLU_2252170_0_0_1"/>
<dbReference type="InParanoid" id="Q12111"/>
<dbReference type="ChiTaRS" id="YDR029W">
    <property type="organism name" value="yeast"/>
</dbReference>
<dbReference type="PRO" id="PR:Q12111"/>
<dbReference type="Proteomes" id="UP000002311">
    <property type="component" value="Chromosome IV"/>
</dbReference>
<dbReference type="RNAct" id="Q12111">
    <property type="molecule type" value="protein"/>
</dbReference>
<dbReference type="GO" id="GO:0016020">
    <property type="term" value="C:membrane"/>
    <property type="evidence" value="ECO:0007669"/>
    <property type="project" value="UniProtKB-SubCell"/>
</dbReference>
<name>YD029_YEAST</name>
<feature type="chain" id="PRO_0000299870" description="Uncharacterized protein YDR029W">
    <location>
        <begin position="1"/>
        <end position="104"/>
    </location>
</feature>
<feature type="transmembrane region" description="Helical" evidence="1">
    <location>
        <begin position="45"/>
        <end position="65"/>
    </location>
</feature>
<feature type="transmembrane region" description="Helical" evidence="1">
    <location>
        <begin position="70"/>
        <end position="90"/>
    </location>
</feature>
<keyword id="KW-0472">Membrane</keyword>
<keyword id="KW-1185">Reference proteome</keyword>
<keyword id="KW-0812">Transmembrane</keyword>
<keyword id="KW-1133">Transmembrane helix</keyword>
<evidence type="ECO:0000255" key="1"/>
<evidence type="ECO:0000305" key="2"/>
<organism>
    <name type="scientific">Saccharomyces cerevisiae (strain ATCC 204508 / S288c)</name>
    <name type="common">Baker's yeast</name>
    <dbReference type="NCBI Taxonomy" id="559292"/>
    <lineage>
        <taxon>Eukaryota</taxon>
        <taxon>Fungi</taxon>
        <taxon>Dikarya</taxon>
        <taxon>Ascomycota</taxon>
        <taxon>Saccharomycotina</taxon>
        <taxon>Saccharomycetes</taxon>
        <taxon>Saccharomycetales</taxon>
        <taxon>Saccharomycetaceae</taxon>
        <taxon>Saccharomyces</taxon>
    </lineage>
</organism>